<organism>
    <name type="scientific">Rhodospirillum centenum (strain ATCC 51521 / SW)</name>
    <dbReference type="NCBI Taxonomy" id="414684"/>
    <lineage>
        <taxon>Bacteria</taxon>
        <taxon>Pseudomonadati</taxon>
        <taxon>Pseudomonadota</taxon>
        <taxon>Alphaproteobacteria</taxon>
        <taxon>Rhodospirillales</taxon>
        <taxon>Rhodospirillaceae</taxon>
        <taxon>Rhodospirillum</taxon>
    </lineage>
</organism>
<protein>
    <recommendedName>
        <fullName evidence="1">Adenine phosphoribosyltransferase</fullName>
        <shortName evidence="1">APRT</shortName>
        <ecNumber evidence="1">2.4.2.7</ecNumber>
    </recommendedName>
</protein>
<proteinExistence type="inferred from homology"/>
<accession>B6IT90</accession>
<comment type="function">
    <text evidence="1">Catalyzes a salvage reaction resulting in the formation of AMP, that is energically less costly than de novo synthesis.</text>
</comment>
<comment type="catalytic activity">
    <reaction evidence="1">
        <text>AMP + diphosphate = 5-phospho-alpha-D-ribose 1-diphosphate + adenine</text>
        <dbReference type="Rhea" id="RHEA:16609"/>
        <dbReference type="ChEBI" id="CHEBI:16708"/>
        <dbReference type="ChEBI" id="CHEBI:33019"/>
        <dbReference type="ChEBI" id="CHEBI:58017"/>
        <dbReference type="ChEBI" id="CHEBI:456215"/>
        <dbReference type="EC" id="2.4.2.7"/>
    </reaction>
</comment>
<comment type="pathway">
    <text evidence="1">Purine metabolism; AMP biosynthesis via salvage pathway; AMP from adenine: step 1/1.</text>
</comment>
<comment type="subunit">
    <text evidence="1">Homodimer.</text>
</comment>
<comment type="subcellular location">
    <subcellularLocation>
        <location evidence="1">Cytoplasm</location>
    </subcellularLocation>
</comment>
<comment type="similarity">
    <text evidence="1">Belongs to the purine/pyrimidine phosphoribosyltransferase family.</text>
</comment>
<evidence type="ECO:0000255" key="1">
    <source>
        <dbReference type="HAMAP-Rule" id="MF_00004"/>
    </source>
</evidence>
<feature type="chain" id="PRO_1000088996" description="Adenine phosphoribosyltransferase">
    <location>
        <begin position="1"/>
        <end position="171"/>
    </location>
</feature>
<dbReference type="EC" id="2.4.2.7" evidence="1"/>
<dbReference type="EMBL" id="CP000613">
    <property type="protein sequence ID" value="ACI98848.1"/>
    <property type="molecule type" value="Genomic_DNA"/>
</dbReference>
<dbReference type="RefSeq" id="WP_012566635.1">
    <property type="nucleotide sequence ID" value="NC_011420.2"/>
</dbReference>
<dbReference type="SMR" id="B6IT90"/>
<dbReference type="STRING" id="414684.RC1_1445"/>
<dbReference type="KEGG" id="rce:RC1_1445"/>
<dbReference type="eggNOG" id="COG0503">
    <property type="taxonomic scope" value="Bacteria"/>
</dbReference>
<dbReference type="HOGENOM" id="CLU_063339_3_0_5"/>
<dbReference type="OrthoDB" id="9803963at2"/>
<dbReference type="UniPathway" id="UPA00588">
    <property type="reaction ID" value="UER00646"/>
</dbReference>
<dbReference type="Proteomes" id="UP000001591">
    <property type="component" value="Chromosome"/>
</dbReference>
<dbReference type="GO" id="GO:0005737">
    <property type="term" value="C:cytoplasm"/>
    <property type="evidence" value="ECO:0007669"/>
    <property type="project" value="UniProtKB-SubCell"/>
</dbReference>
<dbReference type="GO" id="GO:0002055">
    <property type="term" value="F:adenine binding"/>
    <property type="evidence" value="ECO:0007669"/>
    <property type="project" value="TreeGrafter"/>
</dbReference>
<dbReference type="GO" id="GO:0003999">
    <property type="term" value="F:adenine phosphoribosyltransferase activity"/>
    <property type="evidence" value="ECO:0007669"/>
    <property type="project" value="UniProtKB-UniRule"/>
</dbReference>
<dbReference type="GO" id="GO:0016208">
    <property type="term" value="F:AMP binding"/>
    <property type="evidence" value="ECO:0007669"/>
    <property type="project" value="TreeGrafter"/>
</dbReference>
<dbReference type="GO" id="GO:0006168">
    <property type="term" value="P:adenine salvage"/>
    <property type="evidence" value="ECO:0007669"/>
    <property type="project" value="InterPro"/>
</dbReference>
<dbReference type="GO" id="GO:0044209">
    <property type="term" value="P:AMP salvage"/>
    <property type="evidence" value="ECO:0007669"/>
    <property type="project" value="UniProtKB-UniRule"/>
</dbReference>
<dbReference type="GO" id="GO:0006166">
    <property type="term" value="P:purine ribonucleoside salvage"/>
    <property type="evidence" value="ECO:0007669"/>
    <property type="project" value="UniProtKB-KW"/>
</dbReference>
<dbReference type="CDD" id="cd06223">
    <property type="entry name" value="PRTases_typeI"/>
    <property type="match status" value="1"/>
</dbReference>
<dbReference type="FunFam" id="3.40.50.2020:FF:000004">
    <property type="entry name" value="Adenine phosphoribosyltransferase"/>
    <property type="match status" value="1"/>
</dbReference>
<dbReference type="Gene3D" id="3.40.50.2020">
    <property type="match status" value="1"/>
</dbReference>
<dbReference type="HAMAP" id="MF_00004">
    <property type="entry name" value="Aden_phosphoribosyltr"/>
    <property type="match status" value="1"/>
</dbReference>
<dbReference type="InterPro" id="IPR005764">
    <property type="entry name" value="Ade_phspho_trans"/>
</dbReference>
<dbReference type="InterPro" id="IPR000836">
    <property type="entry name" value="PRibTrfase_dom"/>
</dbReference>
<dbReference type="InterPro" id="IPR029057">
    <property type="entry name" value="PRTase-like"/>
</dbReference>
<dbReference type="InterPro" id="IPR050054">
    <property type="entry name" value="UPRTase/APRTase"/>
</dbReference>
<dbReference type="NCBIfam" id="TIGR01090">
    <property type="entry name" value="apt"/>
    <property type="match status" value="1"/>
</dbReference>
<dbReference type="NCBIfam" id="NF002634">
    <property type="entry name" value="PRK02304.1-3"/>
    <property type="match status" value="1"/>
</dbReference>
<dbReference type="NCBIfam" id="NF002636">
    <property type="entry name" value="PRK02304.1-5"/>
    <property type="match status" value="1"/>
</dbReference>
<dbReference type="PANTHER" id="PTHR32315">
    <property type="entry name" value="ADENINE PHOSPHORIBOSYLTRANSFERASE"/>
    <property type="match status" value="1"/>
</dbReference>
<dbReference type="PANTHER" id="PTHR32315:SF3">
    <property type="entry name" value="ADENINE PHOSPHORIBOSYLTRANSFERASE"/>
    <property type="match status" value="1"/>
</dbReference>
<dbReference type="Pfam" id="PF00156">
    <property type="entry name" value="Pribosyltran"/>
    <property type="match status" value="1"/>
</dbReference>
<dbReference type="SUPFAM" id="SSF53271">
    <property type="entry name" value="PRTase-like"/>
    <property type="match status" value="1"/>
</dbReference>
<dbReference type="PROSITE" id="PS00103">
    <property type="entry name" value="PUR_PYR_PR_TRANSFER"/>
    <property type="match status" value="1"/>
</dbReference>
<keyword id="KW-0963">Cytoplasm</keyword>
<keyword id="KW-0328">Glycosyltransferase</keyword>
<keyword id="KW-0660">Purine salvage</keyword>
<keyword id="KW-1185">Reference proteome</keyword>
<keyword id="KW-0808">Transferase</keyword>
<reference key="1">
    <citation type="submission" date="2007-03" db="EMBL/GenBank/DDBJ databases">
        <title>Genome sequence of Rhodospirillum centenum.</title>
        <authorList>
            <person name="Touchman J.W."/>
            <person name="Bauer C."/>
            <person name="Blankenship R.E."/>
        </authorList>
    </citation>
    <scope>NUCLEOTIDE SEQUENCE [LARGE SCALE GENOMIC DNA]</scope>
    <source>
        <strain>ATCC 51521 / SW</strain>
    </source>
</reference>
<gene>
    <name evidence="1" type="primary">apt</name>
    <name type="ordered locus">RC1_1445</name>
</gene>
<sequence>MDIRSHIRTVPDFPKPGILFYDISTLLAHAEAWKATVEKLAEAVAPHKPDLLVGIESRGFLVAAPLSLALGCGFAMVRKKGKLPGQTIRYTYDLEYGTDTVEIQADAIAPGQRVVVLDDLLATGGTMAAAIHLLRSVGADVTAAAFIMELAFLNGRDRLDVPAEVLISYES</sequence>
<name>APT_RHOCS</name>